<comment type="function">
    <text evidence="1">Catalyzes the transfer of an acyl group from acyl-phosphate (acyl-PO(4)) to glycerol-3-phosphate (G3P) to form lysophosphatidic acid (LPA). This enzyme utilizes acyl-phosphate as fatty acyl donor, but not acyl-CoA or acyl-ACP.</text>
</comment>
<comment type="catalytic activity">
    <reaction evidence="1">
        <text>an acyl phosphate + sn-glycerol 3-phosphate = a 1-acyl-sn-glycero-3-phosphate + phosphate</text>
        <dbReference type="Rhea" id="RHEA:34075"/>
        <dbReference type="ChEBI" id="CHEBI:43474"/>
        <dbReference type="ChEBI" id="CHEBI:57597"/>
        <dbReference type="ChEBI" id="CHEBI:57970"/>
        <dbReference type="ChEBI" id="CHEBI:59918"/>
        <dbReference type="EC" id="2.3.1.275"/>
    </reaction>
</comment>
<comment type="pathway">
    <text evidence="1">Lipid metabolism; phospholipid metabolism.</text>
</comment>
<comment type="subunit">
    <text evidence="1">Probably interacts with PlsX.</text>
</comment>
<comment type="subcellular location">
    <subcellularLocation>
        <location evidence="1">Cell inner membrane</location>
        <topology evidence="1">Multi-pass membrane protein</topology>
    </subcellularLocation>
</comment>
<comment type="similarity">
    <text evidence="1">Belongs to the PlsY family.</text>
</comment>
<organism>
    <name type="scientific">Pseudomonas aeruginosa (strain UCBPP-PA14)</name>
    <dbReference type="NCBI Taxonomy" id="208963"/>
    <lineage>
        <taxon>Bacteria</taxon>
        <taxon>Pseudomonadati</taxon>
        <taxon>Pseudomonadota</taxon>
        <taxon>Gammaproteobacteria</taxon>
        <taxon>Pseudomonadales</taxon>
        <taxon>Pseudomonadaceae</taxon>
        <taxon>Pseudomonas</taxon>
    </lineage>
</organism>
<protein>
    <recommendedName>
        <fullName evidence="1">Glycerol-3-phosphate acyltransferase</fullName>
    </recommendedName>
    <alternativeName>
        <fullName evidence="1">Acyl-PO4 G3P acyltransferase</fullName>
    </alternativeName>
    <alternativeName>
        <fullName evidence="1">Acyl-phosphate--glycerol-3-phosphate acyltransferase</fullName>
    </alternativeName>
    <alternativeName>
        <fullName evidence="1">G3P acyltransferase</fullName>
        <shortName evidence="1">GPAT</shortName>
        <ecNumber evidence="1">2.3.1.275</ecNumber>
    </alternativeName>
    <alternativeName>
        <fullName evidence="1">Lysophosphatidic acid synthase</fullName>
        <shortName evidence="1">LPA synthase</shortName>
    </alternativeName>
</protein>
<sequence length="189" mass="20225">MVWLLAILAYLLGSLSFAVLLSRWFGTQDPRASGSGNPGATNMLRVAGKKLAILTLLGDVGKGLLPVLVARWLGLGVMEEAWVGIAAVIGHLYPLYFNFRGGKGVATAAGMLLGLYPPAVLLAAAAWLLTFKLSRTSSLASLVATPLTLPLLAWQQPGALLPMTVLTGLIVWRHRANLRDLFAGRERHF</sequence>
<gene>
    <name evidence="1" type="primary">plsY</name>
    <name type="ordered locus">PA14_07580</name>
</gene>
<dbReference type="EC" id="2.3.1.275" evidence="1"/>
<dbReference type="EMBL" id="CP000438">
    <property type="protein sequence ID" value="ABJ15545.1"/>
    <property type="molecule type" value="Genomic_DNA"/>
</dbReference>
<dbReference type="RefSeq" id="WP_003085061.1">
    <property type="nucleotide sequence ID" value="NZ_CP034244.1"/>
</dbReference>
<dbReference type="SMR" id="Q02TI2"/>
<dbReference type="KEGG" id="pau:PA14_07580"/>
<dbReference type="PseudoCAP" id="PA14_07580"/>
<dbReference type="HOGENOM" id="CLU_081254_0_0_6"/>
<dbReference type="BioCyc" id="PAER208963:G1G74-626-MONOMER"/>
<dbReference type="UniPathway" id="UPA00085"/>
<dbReference type="Proteomes" id="UP000000653">
    <property type="component" value="Chromosome"/>
</dbReference>
<dbReference type="GO" id="GO:0005886">
    <property type="term" value="C:plasma membrane"/>
    <property type="evidence" value="ECO:0007669"/>
    <property type="project" value="UniProtKB-SubCell"/>
</dbReference>
<dbReference type="GO" id="GO:0043772">
    <property type="term" value="F:acyl-phosphate glycerol-3-phosphate acyltransferase activity"/>
    <property type="evidence" value="ECO:0007669"/>
    <property type="project" value="UniProtKB-UniRule"/>
</dbReference>
<dbReference type="GO" id="GO:0008654">
    <property type="term" value="P:phospholipid biosynthetic process"/>
    <property type="evidence" value="ECO:0007669"/>
    <property type="project" value="UniProtKB-UniRule"/>
</dbReference>
<dbReference type="HAMAP" id="MF_01043">
    <property type="entry name" value="PlsY"/>
    <property type="match status" value="1"/>
</dbReference>
<dbReference type="InterPro" id="IPR003811">
    <property type="entry name" value="G3P_acylTferase_PlsY"/>
</dbReference>
<dbReference type="NCBIfam" id="TIGR00023">
    <property type="entry name" value="glycerol-3-phosphate 1-O-acyltransferase PlsY"/>
    <property type="match status" value="1"/>
</dbReference>
<dbReference type="PANTHER" id="PTHR30309:SF0">
    <property type="entry name" value="GLYCEROL-3-PHOSPHATE ACYLTRANSFERASE-RELATED"/>
    <property type="match status" value="1"/>
</dbReference>
<dbReference type="PANTHER" id="PTHR30309">
    <property type="entry name" value="INNER MEMBRANE PROTEIN YGIH"/>
    <property type="match status" value="1"/>
</dbReference>
<dbReference type="Pfam" id="PF02660">
    <property type="entry name" value="G3P_acyltransf"/>
    <property type="match status" value="1"/>
</dbReference>
<dbReference type="SMART" id="SM01207">
    <property type="entry name" value="G3P_acyltransf"/>
    <property type="match status" value="1"/>
</dbReference>
<feature type="chain" id="PRO_1000064209" description="Glycerol-3-phosphate acyltransferase">
    <location>
        <begin position="1"/>
        <end position="189"/>
    </location>
</feature>
<feature type="transmembrane region" description="Helical" evidence="1">
    <location>
        <begin position="1"/>
        <end position="21"/>
    </location>
</feature>
<feature type="transmembrane region" description="Helical" evidence="1">
    <location>
        <begin position="50"/>
        <end position="70"/>
    </location>
</feature>
<feature type="transmembrane region" description="Helical" evidence="1">
    <location>
        <begin position="72"/>
        <end position="92"/>
    </location>
</feature>
<feature type="transmembrane region" description="Helical" evidence="1">
    <location>
        <begin position="111"/>
        <end position="131"/>
    </location>
</feature>
<feature type="transmembrane region" description="Helical" evidence="1">
    <location>
        <begin position="151"/>
        <end position="171"/>
    </location>
</feature>
<name>PLSY_PSEAB</name>
<evidence type="ECO:0000255" key="1">
    <source>
        <dbReference type="HAMAP-Rule" id="MF_01043"/>
    </source>
</evidence>
<accession>Q02TI2</accession>
<keyword id="KW-0997">Cell inner membrane</keyword>
<keyword id="KW-1003">Cell membrane</keyword>
<keyword id="KW-0444">Lipid biosynthesis</keyword>
<keyword id="KW-0443">Lipid metabolism</keyword>
<keyword id="KW-0472">Membrane</keyword>
<keyword id="KW-0594">Phospholipid biosynthesis</keyword>
<keyword id="KW-1208">Phospholipid metabolism</keyword>
<keyword id="KW-0808">Transferase</keyword>
<keyword id="KW-0812">Transmembrane</keyword>
<keyword id="KW-1133">Transmembrane helix</keyword>
<reference key="1">
    <citation type="journal article" date="2006" name="Genome Biol.">
        <title>Genomic analysis reveals that Pseudomonas aeruginosa virulence is combinatorial.</title>
        <authorList>
            <person name="Lee D.G."/>
            <person name="Urbach J.M."/>
            <person name="Wu G."/>
            <person name="Liberati N.T."/>
            <person name="Feinbaum R.L."/>
            <person name="Miyata S."/>
            <person name="Diggins L.T."/>
            <person name="He J."/>
            <person name="Saucier M."/>
            <person name="Deziel E."/>
            <person name="Friedman L."/>
            <person name="Li L."/>
            <person name="Grills G."/>
            <person name="Montgomery K."/>
            <person name="Kucherlapati R."/>
            <person name="Rahme L.G."/>
            <person name="Ausubel F.M."/>
        </authorList>
    </citation>
    <scope>NUCLEOTIDE SEQUENCE [LARGE SCALE GENOMIC DNA]</scope>
    <source>
        <strain>UCBPP-PA14</strain>
    </source>
</reference>
<proteinExistence type="inferred from homology"/>